<organism>
    <name type="scientific">Rattus norvegicus</name>
    <name type="common">Rat</name>
    <dbReference type="NCBI Taxonomy" id="10116"/>
    <lineage>
        <taxon>Eukaryota</taxon>
        <taxon>Metazoa</taxon>
        <taxon>Chordata</taxon>
        <taxon>Craniata</taxon>
        <taxon>Vertebrata</taxon>
        <taxon>Euteleostomi</taxon>
        <taxon>Mammalia</taxon>
        <taxon>Eutheria</taxon>
        <taxon>Euarchontoglires</taxon>
        <taxon>Glires</taxon>
        <taxon>Rodentia</taxon>
        <taxon>Myomorpha</taxon>
        <taxon>Muroidea</taxon>
        <taxon>Muridae</taxon>
        <taxon>Murinae</taxon>
        <taxon>Rattus</taxon>
    </lineage>
</organism>
<gene>
    <name type="primary">Dap</name>
    <name type="synonym">Rap7a</name>
</gene>
<sequence length="102" mass="11166">MSSPPEGKLETKAGHPPAVKVAGIRIVQKHPHTGDGKEKKDKDDQEWESTSPPKPTVYISGVIARGDKDFPPAAAQVAHQKPHASMDKHVSPRTQHIQQPRK</sequence>
<evidence type="ECO:0000250" key="1">
    <source>
        <dbReference type="UniProtKB" id="P51397"/>
    </source>
</evidence>
<evidence type="ECO:0000250" key="2">
    <source>
        <dbReference type="UniProtKB" id="Q91XC8"/>
    </source>
</evidence>
<evidence type="ECO:0000250" key="3">
    <source>
        <dbReference type="UniProtKB" id="Q9I9N1"/>
    </source>
</evidence>
<evidence type="ECO:0000256" key="4">
    <source>
        <dbReference type="SAM" id="MobiDB-lite"/>
    </source>
</evidence>
<evidence type="ECO:0000305" key="5"/>
<evidence type="ECO:0007744" key="6">
    <source>
    </source>
</evidence>
<name>DAP1_RAT</name>
<protein>
    <recommendedName>
        <fullName>Death-associated protein 1</fullName>
        <shortName>DAP-1</shortName>
    </recommendedName>
    <alternativeName>
        <fullName>Rap7a</fullName>
    </alternativeName>
</protein>
<keyword id="KW-0007">Acetylation</keyword>
<keyword id="KW-0053">Apoptosis</keyword>
<keyword id="KW-0072">Autophagy</keyword>
<keyword id="KW-0597">Phosphoprotein</keyword>
<keyword id="KW-1185">Reference proteome</keyword>
<keyword id="KW-0810">Translation regulation</keyword>
<comment type="function">
    <text evidence="1 3">Ribosome-binding protein involved in ribosome hibernation, a process during which ribosomes are stabilized in an inactive state and preserved from proteasomal degradation. Acts via its association with eiF5a (EIF5A and EIF5A2) at the polypeptide exit tunnel of the ribosome, preventing mRNA translation. Involved in ribosome hibernation in the mature oocyte by preventing mRNA translation, leading to ribosome inactivation. Ribosomes, which are produced in large quantities during oogenesis, are stored and translationally repressed in the oocyte and early embryo (By similarity). Also acts as a negative regulator of autophagy. Involved in mediating interferon-gamma-induced cell death (By similarity).</text>
</comment>
<comment type="subunit">
    <text evidence="3">Associates with ribosomes; inhibiting translation. Interacts with eiF5a (EIF5A and EIF5A2); inhibiting translation.</text>
</comment>
<comment type="PTM">
    <text evidence="1">Phosphorylated. Phosphorylation by MTOR inhibits the suppressive activity of DAP toward autophagy.</text>
</comment>
<comment type="similarity">
    <text evidence="5">Belongs to the DAP-DAPL1 family.</text>
</comment>
<reference key="1">
    <citation type="submission" date="1994-01" db="EMBL/GenBank/DDBJ databases">
        <authorList>
            <person name="Hartmann E."/>
            <person name="Goerlich D."/>
            <person name="Prehn S."/>
        </authorList>
    </citation>
    <scope>NUCLEOTIDE SEQUENCE [MRNA]</scope>
    <source>
        <tissue>Liver</tissue>
    </source>
</reference>
<reference key="2">
    <citation type="journal article" date="2004" name="Genome Res.">
        <title>The status, quality, and expansion of the NIH full-length cDNA project: the Mammalian Gene Collection (MGC).</title>
        <authorList>
            <consortium name="The MGC Project Team"/>
        </authorList>
    </citation>
    <scope>NUCLEOTIDE SEQUENCE [LARGE SCALE MRNA]</scope>
    <source>
        <tissue>Pituitary</tissue>
    </source>
</reference>
<reference key="3">
    <citation type="journal article" date="2012" name="Nat. Commun.">
        <title>Quantitative maps of protein phosphorylation sites across 14 different rat organs and tissues.</title>
        <authorList>
            <person name="Lundby A."/>
            <person name="Secher A."/>
            <person name="Lage K."/>
            <person name="Nordsborg N.B."/>
            <person name="Dmytriyev A."/>
            <person name="Lundby C."/>
            <person name="Olsen J.V."/>
        </authorList>
    </citation>
    <scope>PHOSPHORYLATION [LARGE SCALE ANALYSIS] AT SER-51</scope>
    <scope>IDENTIFICATION BY MASS SPECTROMETRY [LARGE SCALE ANALYSIS]</scope>
</reference>
<proteinExistence type="evidence at protein level"/>
<accession>Q9QX67</accession>
<dbReference type="EMBL" id="U05334">
    <property type="protein sequence ID" value="AAF21441.1"/>
    <property type="molecule type" value="mRNA"/>
</dbReference>
<dbReference type="EMBL" id="BC060569">
    <property type="protein sequence ID" value="AAH60569.1"/>
    <property type="molecule type" value="mRNA"/>
</dbReference>
<dbReference type="RefSeq" id="NP_071971.1">
    <property type="nucleotide sequence ID" value="NM_022526.2"/>
</dbReference>
<dbReference type="SMR" id="Q9QX67"/>
<dbReference type="FunCoup" id="Q9QX67">
    <property type="interactions" value="859"/>
</dbReference>
<dbReference type="STRING" id="10116.ENSRNOP00000014439"/>
<dbReference type="iPTMnet" id="Q9QX67"/>
<dbReference type="PhosphoSitePlus" id="Q9QX67"/>
<dbReference type="PaxDb" id="10116-ENSRNOP00000014439"/>
<dbReference type="GeneID" id="64322"/>
<dbReference type="KEGG" id="rno:64322"/>
<dbReference type="UCSC" id="RGD:620641">
    <property type="organism name" value="rat"/>
</dbReference>
<dbReference type="AGR" id="RGD:620641"/>
<dbReference type="CTD" id="1611"/>
<dbReference type="RGD" id="620641">
    <property type="gene designation" value="Dap"/>
</dbReference>
<dbReference type="VEuPathDB" id="HostDB:ENSRNOG00000010747"/>
<dbReference type="eggNOG" id="ENOG502S4ST">
    <property type="taxonomic scope" value="Eukaryota"/>
</dbReference>
<dbReference type="HOGENOM" id="CLU_150759_2_0_1"/>
<dbReference type="InParanoid" id="Q9QX67"/>
<dbReference type="OrthoDB" id="5973225at2759"/>
<dbReference type="PhylomeDB" id="Q9QX67"/>
<dbReference type="TreeFam" id="TF329716"/>
<dbReference type="PRO" id="PR:Q9QX67"/>
<dbReference type="Proteomes" id="UP000002494">
    <property type="component" value="Chromosome 2"/>
</dbReference>
<dbReference type="Bgee" id="ENSRNOG00000010747">
    <property type="expression patterns" value="Expressed in pancreas and 19 other cell types or tissues"/>
</dbReference>
<dbReference type="GO" id="GO:0043022">
    <property type="term" value="F:ribosome binding"/>
    <property type="evidence" value="ECO:0000318"/>
    <property type="project" value="GO_Central"/>
</dbReference>
<dbReference type="GO" id="GO:0006915">
    <property type="term" value="P:apoptotic process"/>
    <property type="evidence" value="ECO:0000266"/>
    <property type="project" value="RGD"/>
</dbReference>
<dbReference type="GO" id="GO:0097190">
    <property type="term" value="P:apoptotic signaling pathway"/>
    <property type="evidence" value="ECO:0000266"/>
    <property type="project" value="RGD"/>
</dbReference>
<dbReference type="GO" id="GO:0006914">
    <property type="term" value="P:autophagy"/>
    <property type="evidence" value="ECO:0007669"/>
    <property type="project" value="UniProtKB-KW"/>
</dbReference>
<dbReference type="GO" id="GO:0010507">
    <property type="term" value="P:negative regulation of autophagy"/>
    <property type="evidence" value="ECO:0000266"/>
    <property type="project" value="RGD"/>
</dbReference>
<dbReference type="GO" id="GO:0141014">
    <property type="term" value="P:ribosome hibernation"/>
    <property type="evidence" value="ECO:0000318"/>
    <property type="project" value="GO_Central"/>
</dbReference>
<dbReference type="InterPro" id="IPR024130">
    <property type="entry name" value="DAP1/DAPL1"/>
</dbReference>
<dbReference type="PANTHER" id="PTHR13177">
    <property type="entry name" value="DEATH-ASSOCIATED PROTEIN 1"/>
    <property type="match status" value="1"/>
</dbReference>
<dbReference type="PANTHER" id="PTHR13177:SF3">
    <property type="entry name" value="DEATH-ASSOCIATED PROTEIN 1"/>
    <property type="match status" value="1"/>
</dbReference>
<dbReference type="Pfam" id="PF15228">
    <property type="entry name" value="DAP"/>
    <property type="match status" value="1"/>
</dbReference>
<feature type="initiator methionine" description="Removed" evidence="1">
    <location>
        <position position="1"/>
    </location>
</feature>
<feature type="chain" id="PRO_0000079784" description="Death-associated protein 1">
    <location>
        <begin position="2"/>
        <end position="102"/>
    </location>
</feature>
<feature type="region of interest" description="Disordered" evidence="4">
    <location>
        <begin position="1"/>
        <end position="102"/>
    </location>
</feature>
<feature type="compositionally biased region" description="Basic and acidic residues" evidence="4">
    <location>
        <begin position="32"/>
        <end position="43"/>
    </location>
</feature>
<feature type="compositionally biased region" description="Polar residues" evidence="4">
    <location>
        <begin position="92"/>
        <end position="102"/>
    </location>
</feature>
<feature type="modified residue" description="N-acetylserine" evidence="1">
    <location>
        <position position="2"/>
    </location>
</feature>
<feature type="modified residue" description="Phosphoserine; by MTOR" evidence="1">
    <location>
        <position position="3"/>
    </location>
</feature>
<feature type="modified residue" description="N6-acetyllysine" evidence="2">
    <location>
        <position position="29"/>
    </location>
</feature>
<feature type="modified residue" description="Phosphoserine" evidence="1">
    <location>
        <position position="49"/>
    </location>
</feature>
<feature type="modified residue" description="Phosphoserine" evidence="6">
    <location>
        <position position="51"/>
    </location>
</feature>
<feature type="modified residue" description="Phosphoserine" evidence="1">
    <location>
        <position position="91"/>
    </location>
</feature>